<reference key="1">
    <citation type="journal article" date="2007" name="J. Bacteriol.">
        <title>Genome-wide transcriptional changes in Streptococcus gordonii in response to competence signaling peptide.</title>
        <authorList>
            <person name="Vickerman M.M."/>
            <person name="Iobst S."/>
            <person name="Jesionowski A.M."/>
            <person name="Gill S.R."/>
        </authorList>
    </citation>
    <scope>NUCLEOTIDE SEQUENCE [LARGE SCALE GENOMIC DNA]</scope>
    <source>
        <strain>Challis / ATCC 35105 / BCRC 15272 / CH1 / DL1 / V288</strain>
    </source>
</reference>
<evidence type="ECO:0000255" key="1">
    <source>
        <dbReference type="HAMAP-Rule" id="MF_00303"/>
    </source>
</evidence>
<dbReference type="EC" id="5.2.1.8" evidence="1"/>
<dbReference type="EMBL" id="CP000725">
    <property type="protein sequence ID" value="ABV10116.1"/>
    <property type="molecule type" value="Genomic_DNA"/>
</dbReference>
<dbReference type="RefSeq" id="WP_011999924.1">
    <property type="nucleotide sequence ID" value="NC_009785.1"/>
</dbReference>
<dbReference type="SMR" id="A8AVB8"/>
<dbReference type="STRING" id="467705.SGO_0412"/>
<dbReference type="KEGG" id="sgo:SGO_0412"/>
<dbReference type="eggNOG" id="COG0544">
    <property type="taxonomic scope" value="Bacteria"/>
</dbReference>
<dbReference type="HOGENOM" id="CLU_033058_3_2_9"/>
<dbReference type="Proteomes" id="UP000001131">
    <property type="component" value="Chromosome"/>
</dbReference>
<dbReference type="GO" id="GO:0005737">
    <property type="term" value="C:cytoplasm"/>
    <property type="evidence" value="ECO:0007669"/>
    <property type="project" value="UniProtKB-SubCell"/>
</dbReference>
<dbReference type="GO" id="GO:0003755">
    <property type="term" value="F:peptidyl-prolyl cis-trans isomerase activity"/>
    <property type="evidence" value="ECO:0007669"/>
    <property type="project" value="UniProtKB-UniRule"/>
</dbReference>
<dbReference type="GO" id="GO:0044183">
    <property type="term" value="F:protein folding chaperone"/>
    <property type="evidence" value="ECO:0007669"/>
    <property type="project" value="TreeGrafter"/>
</dbReference>
<dbReference type="GO" id="GO:0043022">
    <property type="term" value="F:ribosome binding"/>
    <property type="evidence" value="ECO:0007669"/>
    <property type="project" value="TreeGrafter"/>
</dbReference>
<dbReference type="GO" id="GO:0051083">
    <property type="term" value="P:'de novo' cotranslational protein folding"/>
    <property type="evidence" value="ECO:0007669"/>
    <property type="project" value="TreeGrafter"/>
</dbReference>
<dbReference type="GO" id="GO:0051301">
    <property type="term" value="P:cell division"/>
    <property type="evidence" value="ECO:0007669"/>
    <property type="project" value="UniProtKB-KW"/>
</dbReference>
<dbReference type="GO" id="GO:0061077">
    <property type="term" value="P:chaperone-mediated protein folding"/>
    <property type="evidence" value="ECO:0007669"/>
    <property type="project" value="TreeGrafter"/>
</dbReference>
<dbReference type="GO" id="GO:0015031">
    <property type="term" value="P:protein transport"/>
    <property type="evidence" value="ECO:0007669"/>
    <property type="project" value="UniProtKB-UniRule"/>
</dbReference>
<dbReference type="GO" id="GO:0043335">
    <property type="term" value="P:protein unfolding"/>
    <property type="evidence" value="ECO:0007669"/>
    <property type="project" value="TreeGrafter"/>
</dbReference>
<dbReference type="FunFam" id="3.10.50.40:FF:000001">
    <property type="entry name" value="Trigger factor"/>
    <property type="match status" value="1"/>
</dbReference>
<dbReference type="Gene3D" id="3.10.50.40">
    <property type="match status" value="1"/>
</dbReference>
<dbReference type="Gene3D" id="3.30.70.1050">
    <property type="entry name" value="Trigger factor ribosome-binding domain"/>
    <property type="match status" value="1"/>
</dbReference>
<dbReference type="Gene3D" id="1.10.3120.10">
    <property type="entry name" value="Trigger factor, C-terminal domain"/>
    <property type="match status" value="1"/>
</dbReference>
<dbReference type="HAMAP" id="MF_00303">
    <property type="entry name" value="Trigger_factor_Tig"/>
    <property type="match status" value="1"/>
</dbReference>
<dbReference type="InterPro" id="IPR046357">
    <property type="entry name" value="PPIase_dom_sf"/>
</dbReference>
<dbReference type="InterPro" id="IPR001179">
    <property type="entry name" value="PPIase_FKBP_dom"/>
</dbReference>
<dbReference type="InterPro" id="IPR005215">
    <property type="entry name" value="Trig_fac"/>
</dbReference>
<dbReference type="InterPro" id="IPR008880">
    <property type="entry name" value="Trigger_fac_C"/>
</dbReference>
<dbReference type="InterPro" id="IPR037041">
    <property type="entry name" value="Trigger_fac_C_sf"/>
</dbReference>
<dbReference type="InterPro" id="IPR008881">
    <property type="entry name" value="Trigger_fac_ribosome-bd_bac"/>
</dbReference>
<dbReference type="InterPro" id="IPR036611">
    <property type="entry name" value="Trigger_fac_ribosome-bd_sf"/>
</dbReference>
<dbReference type="InterPro" id="IPR027304">
    <property type="entry name" value="Trigger_fact/SurA_dom_sf"/>
</dbReference>
<dbReference type="NCBIfam" id="TIGR00115">
    <property type="entry name" value="tig"/>
    <property type="match status" value="1"/>
</dbReference>
<dbReference type="PANTHER" id="PTHR30560">
    <property type="entry name" value="TRIGGER FACTOR CHAPERONE AND PEPTIDYL-PROLYL CIS/TRANS ISOMERASE"/>
    <property type="match status" value="1"/>
</dbReference>
<dbReference type="PANTHER" id="PTHR30560:SF3">
    <property type="entry name" value="TRIGGER FACTOR-LIKE PROTEIN TIG, CHLOROPLASTIC"/>
    <property type="match status" value="1"/>
</dbReference>
<dbReference type="Pfam" id="PF00254">
    <property type="entry name" value="FKBP_C"/>
    <property type="match status" value="1"/>
</dbReference>
<dbReference type="Pfam" id="PF05698">
    <property type="entry name" value="Trigger_C"/>
    <property type="match status" value="1"/>
</dbReference>
<dbReference type="Pfam" id="PF05697">
    <property type="entry name" value="Trigger_N"/>
    <property type="match status" value="1"/>
</dbReference>
<dbReference type="PIRSF" id="PIRSF003095">
    <property type="entry name" value="Trigger_factor"/>
    <property type="match status" value="1"/>
</dbReference>
<dbReference type="SUPFAM" id="SSF54534">
    <property type="entry name" value="FKBP-like"/>
    <property type="match status" value="1"/>
</dbReference>
<dbReference type="SUPFAM" id="SSF109998">
    <property type="entry name" value="Triger factor/SurA peptide-binding domain-like"/>
    <property type="match status" value="1"/>
</dbReference>
<dbReference type="SUPFAM" id="SSF102735">
    <property type="entry name" value="Trigger factor ribosome-binding domain"/>
    <property type="match status" value="1"/>
</dbReference>
<dbReference type="PROSITE" id="PS50059">
    <property type="entry name" value="FKBP_PPIASE"/>
    <property type="match status" value="1"/>
</dbReference>
<accession>A8AVB8</accession>
<organism>
    <name type="scientific">Streptococcus gordonii (strain Challis / ATCC 35105 / BCRC 15272 / CH1 / DL1 / V288)</name>
    <dbReference type="NCBI Taxonomy" id="467705"/>
    <lineage>
        <taxon>Bacteria</taxon>
        <taxon>Bacillati</taxon>
        <taxon>Bacillota</taxon>
        <taxon>Bacilli</taxon>
        <taxon>Lactobacillales</taxon>
        <taxon>Streptococcaceae</taxon>
        <taxon>Streptococcus</taxon>
    </lineage>
</organism>
<name>TIG_STRGC</name>
<keyword id="KW-0131">Cell cycle</keyword>
<keyword id="KW-0132">Cell division</keyword>
<keyword id="KW-0143">Chaperone</keyword>
<keyword id="KW-0963">Cytoplasm</keyword>
<keyword id="KW-0413">Isomerase</keyword>
<keyword id="KW-1185">Reference proteome</keyword>
<keyword id="KW-0697">Rotamase</keyword>
<feature type="chain" id="PRO_1000079063" description="Trigger factor">
    <location>
        <begin position="1"/>
        <end position="427"/>
    </location>
</feature>
<feature type="domain" description="PPIase FKBP-type" evidence="1">
    <location>
        <begin position="163"/>
        <end position="248"/>
    </location>
</feature>
<protein>
    <recommendedName>
        <fullName evidence="1">Trigger factor</fullName>
        <shortName evidence="1">TF</shortName>
        <ecNumber evidence="1">5.2.1.8</ecNumber>
    </recommendedName>
    <alternativeName>
        <fullName evidence="1">PPIase</fullName>
    </alternativeName>
</protein>
<gene>
    <name evidence="1" type="primary">tig</name>
    <name type="ordered locus">SGO_0412</name>
</gene>
<comment type="function">
    <text evidence="1">Involved in protein export. Acts as a chaperone by maintaining the newly synthesized protein in an open conformation. Functions as a peptidyl-prolyl cis-trans isomerase.</text>
</comment>
<comment type="catalytic activity">
    <reaction evidence="1">
        <text>[protein]-peptidylproline (omega=180) = [protein]-peptidylproline (omega=0)</text>
        <dbReference type="Rhea" id="RHEA:16237"/>
        <dbReference type="Rhea" id="RHEA-COMP:10747"/>
        <dbReference type="Rhea" id="RHEA-COMP:10748"/>
        <dbReference type="ChEBI" id="CHEBI:83833"/>
        <dbReference type="ChEBI" id="CHEBI:83834"/>
        <dbReference type="EC" id="5.2.1.8"/>
    </reaction>
</comment>
<comment type="subcellular location">
    <subcellularLocation>
        <location>Cytoplasm</location>
    </subcellularLocation>
    <text evidence="1">About half TF is bound to the ribosome near the polypeptide exit tunnel while the other half is free in the cytoplasm.</text>
</comment>
<comment type="domain">
    <text evidence="1">Consists of 3 domains; the N-terminus binds the ribosome, the middle domain has PPIase activity, while the C-terminus has intrinsic chaperone activity on its own.</text>
</comment>
<comment type="similarity">
    <text evidence="1">Belongs to the FKBP-type PPIase family. Tig subfamily.</text>
</comment>
<sequence>MSVSFEKKETNRGVLTFTISQEQIKPELDRVFNSVKKTINVPGFRKGHLPRPVFNQKFGEEALYQDALNNLLPNAYEAAVKEAGIEVVAQPKIDVVSMEKGQDWTISAEVVTKPEVKLGAYKDLEVSVEVSKEVTDEDVDARIERERNNLAELVLKEGPAAEGDTVVIDFVGSVDGVEFDGGKGDNFSLGLGSGQFIPGFEDQLVGHKAGETVDVVVTFPEDYQAADLAGKEAKFVTTIHEVKEKEVPALDDELAKDIDEEVETLDELKEKYRKELAEGKEAAYKDAVESAAIDLAVENAEIVELPEEMVHEEVHRSVNEFLGNMQRQGISPDMYFQITGTTQEDLHKQHEADAEARTKTNLVIEAIAKAEGFEASAEEIEAEISSLANDYNMEADRVRQLLSEDMLKHDITIKKAVEVITSTAKVK</sequence>
<proteinExistence type="inferred from homology"/>